<comment type="subcellular location">
    <subcellularLocation>
        <location evidence="1">Membrane</location>
        <topology evidence="1">Multi-pass membrane protein</topology>
    </subcellularLocation>
</comment>
<comment type="alternative products">
    <event type="alternative splicing"/>
    <isoform>
        <id>Q96PG1-1</id>
        <name>1</name>
        <sequence type="displayed"/>
    </isoform>
    <isoform>
        <id>Q96PG1-2</id>
        <name>2</name>
        <sequence type="described" ref="VSP_033858"/>
    </isoform>
    <isoform>
        <id>Q96PG1-3</id>
        <name>3</name>
        <sequence type="described" ref="VSP_033859"/>
    </isoform>
</comment>
<comment type="similarity">
    <text evidence="4">Belongs to the MS4A family.</text>
</comment>
<comment type="caution">
    <text evidence="4">It is uncertain whether Met-1 or Met-4 is the initiator.</text>
</comment>
<comment type="sequence caution" evidence="4">
    <conflict type="miscellaneous discrepancy">
        <sequence resource="EMBL-CDS" id="AAL07363"/>
    </conflict>
    <text>Intron retention. The entire sequence corresponds to part of an intron.</text>
</comment>
<organism>
    <name type="scientific">Homo sapiens</name>
    <name type="common">Human</name>
    <dbReference type="NCBI Taxonomy" id="9606"/>
    <lineage>
        <taxon>Eukaryota</taxon>
        <taxon>Metazoa</taxon>
        <taxon>Chordata</taxon>
        <taxon>Craniata</taxon>
        <taxon>Vertebrata</taxon>
        <taxon>Euteleostomi</taxon>
        <taxon>Mammalia</taxon>
        <taxon>Eutheria</taxon>
        <taxon>Euarchontoglires</taxon>
        <taxon>Primates</taxon>
        <taxon>Haplorrhini</taxon>
        <taxon>Catarrhini</taxon>
        <taxon>Hominidae</taxon>
        <taxon>Homo</taxon>
    </lineage>
</organism>
<proteinExistence type="evidence at transcript level"/>
<accession>Q96PG1</accession>
<accession>Q3C1W1</accession>
<accession>Q3C1W3</accession>
<accession>Q3C1W4</accession>
<gene>
    <name type="primary">MS4A4E</name>
</gene>
<keyword id="KW-0025">Alternative splicing</keyword>
<keyword id="KW-0472">Membrane</keyword>
<keyword id="KW-0675">Receptor</keyword>
<keyword id="KW-1185">Reference proteome</keyword>
<keyword id="KW-0812">Transmembrane</keyword>
<keyword id="KW-1133">Transmembrane helix</keyword>
<name>M4A4E_HUMAN</name>
<evidence type="ECO:0000250" key="1"/>
<evidence type="ECO:0000255" key="2"/>
<evidence type="ECO:0000303" key="3">
    <source ref="3"/>
</evidence>
<evidence type="ECO:0000305" key="4"/>
<feature type="chain" id="PRO_0000158636" description="Putative membrane-spanning 4-domains subfamily A member 4E">
    <location>
        <begin position="1"/>
        <end position="132"/>
    </location>
</feature>
<feature type="transmembrane region" description="Helical" evidence="2">
    <location>
        <begin position="52"/>
        <end position="72"/>
    </location>
</feature>
<feature type="transmembrane region" description="Helical" evidence="2">
    <location>
        <begin position="76"/>
        <end position="96"/>
    </location>
</feature>
<feature type="splice variant" id="VSP_033858" description="In isoform 2." evidence="3">
    <location>
        <begin position="49"/>
        <end position="91"/>
    </location>
</feature>
<feature type="splice variant" id="VSP_033859" description="In isoform 3." evidence="3">
    <original>VRILIALMSLSMGIIMMCVAFSSYEEHPIFVYVAYTIWGSVMYPYQLQQELEQQKVWNYLKNLSWRIMGSYLCFGERSELKPL</original>
    <variation>LCGHKFSTHSVSLSVAAGIRTTKGLELSEEFKLENNGIIFVFWREIRVETTIRRQVRRLLK</variation>
    <location>
        <begin position="50"/>
        <end position="132"/>
    </location>
</feature>
<feature type="sequence conflict" description="In Ref. 3; BAE46883." evidence="4" ref="3">
    <original>TT</original>
    <variation>AM</variation>
    <location>
        <begin position="10"/>
        <end position="11"/>
    </location>
</feature>
<feature type="sequence conflict" description="In Ref. 3; BAE46883." evidence="4" ref="3">
    <original>D</original>
    <variation>G</variation>
    <location>
        <position position="17"/>
    </location>
</feature>
<sequence length="132" mass="15209">MTTMQGMEQTTPGAGPDVPQLGNIDVIHSYLCKGLQEKFFKRKPKVLGVVRILIALMSLSMGIIMMCVAFSSYEEHPIFVYVAYTIWGSVMYPYQLQQELEQQKVWNYLKNLSWRIMGSYLCFGERSELKPL</sequence>
<dbReference type="EMBL" id="DC379793">
    <property type="status" value="NOT_ANNOTATED_CDS"/>
    <property type="molecule type" value="mRNA"/>
</dbReference>
<dbReference type="EMBL" id="AF354936">
    <property type="protein sequence ID" value="AAL07363.1"/>
    <property type="status" value="ALT_SEQ"/>
    <property type="molecule type" value="Genomic_DNA"/>
</dbReference>
<dbReference type="EMBL" id="AB231725">
    <property type="protein sequence ID" value="BAE46883.1"/>
    <property type="molecule type" value="mRNA"/>
</dbReference>
<dbReference type="EMBL" id="AB231726">
    <property type="protein sequence ID" value="BAE46884.1"/>
    <property type="molecule type" value="mRNA"/>
</dbReference>
<dbReference type="EMBL" id="AB231727">
    <property type="protein sequence ID" value="BAE46885.1"/>
    <property type="molecule type" value="mRNA"/>
</dbReference>
<dbReference type="EMBL" id="AB231728">
    <property type="protein sequence ID" value="BAE46886.1"/>
    <property type="molecule type" value="mRNA"/>
</dbReference>
<dbReference type="STRING" id="9606.ENSP00000499123"/>
<dbReference type="BioMuta" id="MS4A4E"/>
<dbReference type="DMDM" id="189047113"/>
<dbReference type="PaxDb" id="9606-ENSP00000381956"/>
<dbReference type="Antibodypedia" id="50251">
    <property type="antibodies" value="7 antibodies from 6 providers"/>
</dbReference>
<dbReference type="Ensembl" id="ENST00000398984.6">
    <molecule id="Q96PG1-1"/>
    <property type="protein sequence ID" value="ENSP00000381954.2"/>
    <property type="gene ID" value="ENSG00000214787.11"/>
</dbReference>
<dbReference type="UCSC" id="uc001nox.3">
    <molecule id="Q96PG1-1"/>
    <property type="organism name" value="human"/>
</dbReference>
<dbReference type="AGR" id="HGNC:14284"/>
<dbReference type="GeneCards" id="MS4A4E"/>
<dbReference type="HGNC" id="HGNC:14284">
    <property type="gene designation" value="MS4A4E"/>
</dbReference>
<dbReference type="HPA" id="ENSG00000214787">
    <property type="expression patterns" value="Low tissue specificity"/>
</dbReference>
<dbReference type="MIM" id="608401">
    <property type="type" value="gene"/>
</dbReference>
<dbReference type="neXtProt" id="NX_Q96PG1"/>
<dbReference type="OpenTargets" id="ENSG00000214787"/>
<dbReference type="VEuPathDB" id="HostDB:ENSG00000214787"/>
<dbReference type="eggNOG" id="ENOG502S3XD">
    <property type="taxonomic scope" value="Eukaryota"/>
</dbReference>
<dbReference type="GeneTree" id="ENSGT00940000155376"/>
<dbReference type="HOGENOM" id="CLU_2454059_0_0_1"/>
<dbReference type="InParanoid" id="Q96PG1"/>
<dbReference type="OrthoDB" id="10071849at2759"/>
<dbReference type="PAN-GO" id="Q96PG1">
    <property type="GO annotations" value="2 GO annotations based on evolutionary models"/>
</dbReference>
<dbReference type="PhylomeDB" id="Q96PG1"/>
<dbReference type="ChiTaRS" id="MS4A4E">
    <property type="organism name" value="human"/>
</dbReference>
<dbReference type="Pharos" id="Q96PG1">
    <property type="development level" value="Tdark"/>
</dbReference>
<dbReference type="PRO" id="PR:Q96PG1"/>
<dbReference type="Proteomes" id="UP000005640">
    <property type="component" value="Chromosome 11"/>
</dbReference>
<dbReference type="RNAct" id="Q96PG1">
    <property type="molecule type" value="protein"/>
</dbReference>
<dbReference type="Bgee" id="ENSG00000214787">
    <property type="expression patterns" value="Expressed in monocyte and 102 other cell types or tissues"/>
</dbReference>
<dbReference type="ExpressionAtlas" id="Q96PG1">
    <property type="expression patterns" value="baseline and differential"/>
</dbReference>
<dbReference type="GO" id="GO:0016020">
    <property type="term" value="C:membrane"/>
    <property type="evidence" value="ECO:0007669"/>
    <property type="project" value="UniProtKB-SubCell"/>
</dbReference>
<dbReference type="InterPro" id="IPR007237">
    <property type="entry name" value="CD20-like"/>
</dbReference>
<dbReference type="Pfam" id="PF04103">
    <property type="entry name" value="CD20"/>
    <property type="match status" value="1"/>
</dbReference>
<protein>
    <recommendedName>
        <fullName>Putative membrane-spanning 4-domains subfamily A member 4E</fullName>
    </recommendedName>
</protein>
<reference key="1">
    <citation type="journal article" date="2004" name="Nat. Genet.">
        <title>Complete sequencing and characterization of 21,243 full-length human cDNAs.</title>
        <authorList>
            <person name="Ota T."/>
            <person name="Suzuki Y."/>
            <person name="Nishikawa T."/>
            <person name="Otsuki T."/>
            <person name="Sugiyama T."/>
            <person name="Irie R."/>
            <person name="Wakamatsu A."/>
            <person name="Hayashi K."/>
            <person name="Sato H."/>
            <person name="Nagai K."/>
            <person name="Kimura K."/>
            <person name="Makita H."/>
            <person name="Sekine M."/>
            <person name="Obayashi M."/>
            <person name="Nishi T."/>
            <person name="Shibahara T."/>
            <person name="Tanaka T."/>
            <person name="Ishii S."/>
            <person name="Yamamoto J."/>
            <person name="Saito K."/>
            <person name="Kawai Y."/>
            <person name="Isono Y."/>
            <person name="Nakamura Y."/>
            <person name="Nagahari K."/>
            <person name="Murakami K."/>
            <person name="Yasuda T."/>
            <person name="Iwayanagi T."/>
            <person name="Wagatsuma M."/>
            <person name="Shiratori A."/>
            <person name="Sudo H."/>
            <person name="Hosoiri T."/>
            <person name="Kaku Y."/>
            <person name="Kodaira H."/>
            <person name="Kondo H."/>
            <person name="Sugawara M."/>
            <person name="Takahashi M."/>
            <person name="Kanda K."/>
            <person name="Yokoi T."/>
            <person name="Furuya T."/>
            <person name="Kikkawa E."/>
            <person name="Omura Y."/>
            <person name="Abe K."/>
            <person name="Kamihara K."/>
            <person name="Katsuta N."/>
            <person name="Sato K."/>
            <person name="Tanikawa M."/>
            <person name="Yamazaki M."/>
            <person name="Ninomiya K."/>
            <person name="Ishibashi T."/>
            <person name="Yamashita H."/>
            <person name="Murakawa K."/>
            <person name="Fujimori K."/>
            <person name="Tanai H."/>
            <person name="Kimata M."/>
            <person name="Watanabe M."/>
            <person name="Hiraoka S."/>
            <person name="Chiba Y."/>
            <person name="Ishida S."/>
            <person name="Ono Y."/>
            <person name="Takiguchi S."/>
            <person name="Watanabe S."/>
            <person name="Yosida M."/>
            <person name="Hotuta T."/>
            <person name="Kusano J."/>
            <person name="Kanehori K."/>
            <person name="Takahashi-Fujii A."/>
            <person name="Hara H."/>
            <person name="Tanase T.-O."/>
            <person name="Nomura Y."/>
            <person name="Togiya S."/>
            <person name="Komai F."/>
            <person name="Hara R."/>
            <person name="Takeuchi K."/>
            <person name="Arita M."/>
            <person name="Imose N."/>
            <person name="Musashino K."/>
            <person name="Yuuki H."/>
            <person name="Oshima A."/>
            <person name="Sasaki N."/>
            <person name="Aotsuka S."/>
            <person name="Yoshikawa Y."/>
            <person name="Matsunawa H."/>
            <person name="Ichihara T."/>
            <person name="Shiohata N."/>
            <person name="Sano S."/>
            <person name="Moriya S."/>
            <person name="Momiyama H."/>
            <person name="Satoh N."/>
            <person name="Takami S."/>
            <person name="Terashima Y."/>
            <person name="Suzuki O."/>
            <person name="Nakagawa S."/>
            <person name="Senoh A."/>
            <person name="Mizoguchi H."/>
            <person name="Goto Y."/>
            <person name="Shimizu F."/>
            <person name="Wakebe H."/>
            <person name="Hishigaki H."/>
            <person name="Watanabe T."/>
            <person name="Sugiyama A."/>
            <person name="Takemoto M."/>
            <person name="Kawakami B."/>
            <person name="Yamazaki M."/>
            <person name="Watanabe K."/>
            <person name="Kumagai A."/>
            <person name="Itakura S."/>
            <person name="Fukuzumi Y."/>
            <person name="Fujimori Y."/>
            <person name="Komiyama M."/>
            <person name="Tashiro H."/>
            <person name="Tanigami A."/>
            <person name="Fujiwara T."/>
            <person name="Ono T."/>
            <person name="Yamada K."/>
            <person name="Fujii Y."/>
            <person name="Ozaki K."/>
            <person name="Hirao M."/>
            <person name="Ohmori Y."/>
            <person name="Kawabata A."/>
            <person name="Hikiji T."/>
            <person name="Kobatake N."/>
            <person name="Inagaki H."/>
            <person name="Ikema Y."/>
            <person name="Okamoto S."/>
            <person name="Okitani R."/>
            <person name="Kawakami T."/>
            <person name="Noguchi S."/>
            <person name="Itoh T."/>
            <person name="Shigeta K."/>
            <person name="Senba T."/>
            <person name="Matsumura K."/>
            <person name="Nakajima Y."/>
            <person name="Mizuno T."/>
            <person name="Morinaga M."/>
            <person name="Sasaki M."/>
            <person name="Togashi T."/>
            <person name="Oyama M."/>
            <person name="Hata H."/>
            <person name="Watanabe M."/>
            <person name="Komatsu T."/>
            <person name="Mizushima-Sugano J."/>
            <person name="Satoh T."/>
            <person name="Shirai Y."/>
            <person name="Takahashi Y."/>
            <person name="Nakagawa K."/>
            <person name="Okumura K."/>
            <person name="Nagase T."/>
            <person name="Nomura N."/>
            <person name="Kikuchi H."/>
            <person name="Masuho Y."/>
            <person name="Yamashita R."/>
            <person name="Nakai K."/>
            <person name="Yada T."/>
            <person name="Nakamura Y."/>
            <person name="Ohara O."/>
            <person name="Isogai T."/>
            <person name="Sugano S."/>
        </authorList>
    </citation>
    <scope>NUCLEOTIDE SEQUENCE [LARGE SCALE MRNA]</scope>
</reference>
<reference key="2">
    <citation type="journal article" date="2001" name="Immunogenetics">
        <title>Structural organization of the human MS4A gene cluster on chromosome 11q12.</title>
        <authorList>
            <person name="Liang Y."/>
            <person name="Buckley T.R."/>
            <person name="Tu L."/>
            <person name="Langdon S.D."/>
            <person name="Tedder T.F."/>
        </authorList>
    </citation>
    <scope>NUCLEOTIDE SEQUENCE [GENOMIC DNA]</scope>
</reference>
<reference key="3">
    <citation type="submission" date="2005-08" db="EMBL/GenBank/DDBJ databases">
        <title>Identification of novel human genes predicted by combining multiple gene-finders.</title>
        <authorList>
            <person name="Totoki Y."/>
            <person name="Yada T."/>
            <person name="Sakaki Y."/>
            <person name="Takeda T."/>
        </authorList>
    </citation>
    <scope>NUCLEOTIDE SEQUENCE [LARGE SCALE MRNA] OF 3-132 (ISOFORMS 1; 2 AND 3)</scope>
</reference>